<evidence type="ECO:0000250" key="1"/>
<evidence type="ECO:0000255" key="2">
    <source>
        <dbReference type="HAMAP-Rule" id="MF_01158"/>
    </source>
</evidence>
<evidence type="ECO:0000305" key="3"/>
<comment type="function">
    <text evidence="1">Mediates the interaction of DNA replication initiator protein DnaA with DNA polymerase subunit beta sliding clamp (dnaN). Stimulates hydrolysis of ATP-DnaA to ADP-DnaA, rendering DnaA inactive for reinitiation, a process called regulatory inhibition of DnaA or RIDA (By similarity).</text>
</comment>
<comment type="subunit">
    <text evidence="2">The active form seems to be an ADP-bound monomer. Forms the RIDA complex (regulatory inactivation of DnaA) of ATP-DnaA, ADP-Hda and the DNA-loaded beta sliding clamp (dnaN).</text>
</comment>
<comment type="similarity">
    <text evidence="2">Belongs to the DnaA family. HdA subfamily.</text>
</comment>
<comment type="sequence caution" evidence="3">
    <conflict type="erroneous initiation">
        <sequence resource="EMBL-CDS" id="ABJ01879"/>
    </conflict>
</comment>
<proteinExistence type="inferred from homology"/>
<keyword id="KW-0235">DNA replication</keyword>
<keyword id="KW-0236">DNA replication inhibitor</keyword>
<keyword id="KW-1185">Reference proteome</keyword>
<gene>
    <name evidence="2" type="primary">hda</name>
    <name type="ordered locus">Ecok1_23850</name>
    <name type="ORF">APECO1_4073</name>
</gene>
<accession>A1ADY9</accession>
<protein>
    <recommendedName>
        <fullName evidence="2">DnaA regulatory inactivator Hda</fullName>
    </recommendedName>
</protein>
<feature type="chain" id="PRO_1000065561" description="DnaA regulatory inactivator Hda">
    <location>
        <begin position="1"/>
        <end position="233"/>
    </location>
</feature>
<reference key="1">
    <citation type="journal article" date="2007" name="J. Bacteriol.">
        <title>The genome sequence of avian pathogenic Escherichia coli strain O1:K1:H7 shares strong similarities with human extraintestinal pathogenic E. coli genomes.</title>
        <authorList>
            <person name="Johnson T.J."/>
            <person name="Kariyawasam S."/>
            <person name="Wannemuehler Y."/>
            <person name="Mangiamele P."/>
            <person name="Johnson S.J."/>
            <person name="Doetkott C."/>
            <person name="Skyberg J.A."/>
            <person name="Lynne A.M."/>
            <person name="Johnson J.R."/>
            <person name="Nolan L.K."/>
        </authorList>
    </citation>
    <scope>NUCLEOTIDE SEQUENCE [LARGE SCALE GENOMIC DNA]</scope>
</reference>
<dbReference type="EMBL" id="CP000468">
    <property type="protein sequence ID" value="ABJ01879.1"/>
    <property type="status" value="ALT_INIT"/>
    <property type="molecule type" value="Genomic_DNA"/>
</dbReference>
<dbReference type="RefSeq" id="WP_001307333.1">
    <property type="nucleotide sequence ID" value="NZ_CADILS010000040.1"/>
</dbReference>
<dbReference type="SMR" id="A1ADY9"/>
<dbReference type="KEGG" id="ecv:APECO1_4073"/>
<dbReference type="HOGENOM" id="CLU_072265_1_1_6"/>
<dbReference type="Proteomes" id="UP000008216">
    <property type="component" value="Chromosome"/>
</dbReference>
<dbReference type="GO" id="GO:0006270">
    <property type="term" value="P:DNA replication initiation"/>
    <property type="evidence" value="ECO:0007669"/>
    <property type="project" value="TreeGrafter"/>
</dbReference>
<dbReference type="GO" id="GO:0032297">
    <property type="term" value="P:negative regulation of DNA-templated DNA replication initiation"/>
    <property type="evidence" value="ECO:0007669"/>
    <property type="project" value="InterPro"/>
</dbReference>
<dbReference type="FunFam" id="1.10.8.60:FF:000024">
    <property type="entry name" value="DnaA regulatory inactivator Hda"/>
    <property type="match status" value="1"/>
</dbReference>
<dbReference type="FunFam" id="3.40.50.300:FF:000452">
    <property type="entry name" value="DnaA regulatory inactivator Hda"/>
    <property type="match status" value="1"/>
</dbReference>
<dbReference type="Gene3D" id="1.10.8.60">
    <property type="match status" value="1"/>
</dbReference>
<dbReference type="Gene3D" id="3.40.50.300">
    <property type="entry name" value="P-loop containing nucleotide triphosphate hydrolases"/>
    <property type="match status" value="1"/>
</dbReference>
<dbReference type="HAMAP" id="MF_01158">
    <property type="entry name" value="Hda"/>
    <property type="match status" value="1"/>
</dbReference>
<dbReference type="InterPro" id="IPR020591">
    <property type="entry name" value="Chromosome_initiator_DnaA-like"/>
</dbReference>
<dbReference type="InterPro" id="IPR013317">
    <property type="entry name" value="DnaA_dom"/>
</dbReference>
<dbReference type="InterPro" id="IPR017788">
    <property type="entry name" value="Hda"/>
</dbReference>
<dbReference type="InterPro" id="IPR022864">
    <property type="entry name" value="Hda_Enterobact"/>
</dbReference>
<dbReference type="InterPro" id="IPR055199">
    <property type="entry name" value="Hda_lid"/>
</dbReference>
<dbReference type="InterPro" id="IPR027417">
    <property type="entry name" value="P-loop_NTPase"/>
</dbReference>
<dbReference type="NCBIfam" id="TIGR03420">
    <property type="entry name" value="DnaA_homol_Hda"/>
    <property type="match status" value="1"/>
</dbReference>
<dbReference type="NCBIfam" id="NF005982">
    <property type="entry name" value="PRK08084.1"/>
    <property type="match status" value="1"/>
</dbReference>
<dbReference type="PANTHER" id="PTHR30050">
    <property type="entry name" value="CHROMOSOMAL REPLICATION INITIATOR PROTEIN DNAA"/>
    <property type="match status" value="1"/>
</dbReference>
<dbReference type="PANTHER" id="PTHR30050:SF5">
    <property type="entry name" value="DNAA REGULATORY INACTIVATOR HDA"/>
    <property type="match status" value="1"/>
</dbReference>
<dbReference type="Pfam" id="PF00308">
    <property type="entry name" value="Bac_DnaA"/>
    <property type="match status" value="1"/>
</dbReference>
<dbReference type="Pfam" id="PF22688">
    <property type="entry name" value="Hda_lid"/>
    <property type="match status" value="1"/>
</dbReference>
<dbReference type="PRINTS" id="PR00051">
    <property type="entry name" value="DNAA"/>
</dbReference>
<dbReference type="SUPFAM" id="SSF52540">
    <property type="entry name" value="P-loop containing nucleoside triphosphate hydrolases"/>
    <property type="match status" value="1"/>
</dbReference>
<name>HDA_ECOK1</name>
<organism>
    <name type="scientific">Escherichia coli O1:K1 / APEC</name>
    <dbReference type="NCBI Taxonomy" id="405955"/>
    <lineage>
        <taxon>Bacteria</taxon>
        <taxon>Pseudomonadati</taxon>
        <taxon>Pseudomonadota</taxon>
        <taxon>Gammaproteobacteria</taxon>
        <taxon>Enterobacterales</taxon>
        <taxon>Enterobacteriaceae</taxon>
        <taxon>Escherichia</taxon>
    </lineage>
</organism>
<sequence>MNTPAQLSLPLYLPDDETFASFWPGDNSSLLAALQNVLRQEHSGYIYLWAREGAGRSHLLHAACAELSQRGDAVGYVPLDKRTWFVPEVLDGMEHLSLVCIDNIECIAGDELWEMAIFDLYNRILESGKTRLLITGDRPPRQLNLGLPDLASRLDWGQIYKLQPLSDEDKLQALQLRARLRGFELPEDVGRFLLKRLDREMRTLFMTLDQLDRASITAQRKLTIPFVKEILKL</sequence>